<accession>Q2J0F8</accession>
<comment type="function">
    <text evidence="1">Endonuclease that specifically degrades the RNA of RNA-DNA hybrids.</text>
</comment>
<comment type="catalytic activity">
    <reaction evidence="1">
        <text>Endonucleolytic cleavage to 5'-phosphomonoester.</text>
        <dbReference type="EC" id="3.1.26.4"/>
    </reaction>
</comment>
<comment type="cofactor">
    <cofactor evidence="1">
        <name>Mg(2+)</name>
        <dbReference type="ChEBI" id="CHEBI:18420"/>
    </cofactor>
    <text evidence="1">Binds 1 Mg(2+) ion per subunit. May bind a second metal ion at a regulatory site, or after substrate binding.</text>
</comment>
<comment type="subunit">
    <text evidence="1">Monomer.</text>
</comment>
<comment type="subcellular location">
    <subcellularLocation>
        <location evidence="1">Cytoplasm</location>
    </subcellularLocation>
</comment>
<comment type="similarity">
    <text evidence="1">Belongs to the RNase H family.</text>
</comment>
<name>RNH_RHOP2</name>
<dbReference type="EC" id="3.1.26.4" evidence="1"/>
<dbReference type="EMBL" id="CP000250">
    <property type="protein sequence ID" value="ABD06052.1"/>
    <property type="molecule type" value="Genomic_DNA"/>
</dbReference>
<dbReference type="SMR" id="Q2J0F8"/>
<dbReference type="STRING" id="316058.RPB_1342"/>
<dbReference type="KEGG" id="rpb:RPB_1342"/>
<dbReference type="eggNOG" id="COG0328">
    <property type="taxonomic scope" value="Bacteria"/>
</dbReference>
<dbReference type="HOGENOM" id="CLU_030894_6_0_5"/>
<dbReference type="Proteomes" id="UP000008809">
    <property type="component" value="Chromosome"/>
</dbReference>
<dbReference type="GO" id="GO:0005737">
    <property type="term" value="C:cytoplasm"/>
    <property type="evidence" value="ECO:0007669"/>
    <property type="project" value="UniProtKB-SubCell"/>
</dbReference>
<dbReference type="GO" id="GO:0000287">
    <property type="term" value="F:magnesium ion binding"/>
    <property type="evidence" value="ECO:0007669"/>
    <property type="project" value="UniProtKB-UniRule"/>
</dbReference>
<dbReference type="GO" id="GO:0003676">
    <property type="term" value="F:nucleic acid binding"/>
    <property type="evidence" value="ECO:0007669"/>
    <property type="project" value="InterPro"/>
</dbReference>
<dbReference type="GO" id="GO:0004523">
    <property type="term" value="F:RNA-DNA hybrid ribonuclease activity"/>
    <property type="evidence" value="ECO:0007669"/>
    <property type="project" value="UniProtKB-UniRule"/>
</dbReference>
<dbReference type="GO" id="GO:0043137">
    <property type="term" value="P:DNA replication, removal of RNA primer"/>
    <property type="evidence" value="ECO:0007669"/>
    <property type="project" value="TreeGrafter"/>
</dbReference>
<dbReference type="CDD" id="cd09278">
    <property type="entry name" value="RNase_HI_prokaryote_like"/>
    <property type="match status" value="1"/>
</dbReference>
<dbReference type="FunFam" id="3.30.420.10:FF:000008">
    <property type="entry name" value="Ribonuclease H"/>
    <property type="match status" value="1"/>
</dbReference>
<dbReference type="Gene3D" id="3.30.420.10">
    <property type="entry name" value="Ribonuclease H-like superfamily/Ribonuclease H"/>
    <property type="match status" value="1"/>
</dbReference>
<dbReference type="HAMAP" id="MF_00042">
    <property type="entry name" value="RNase_H"/>
    <property type="match status" value="1"/>
</dbReference>
<dbReference type="InterPro" id="IPR050092">
    <property type="entry name" value="RNase_H"/>
</dbReference>
<dbReference type="InterPro" id="IPR012337">
    <property type="entry name" value="RNaseH-like_sf"/>
</dbReference>
<dbReference type="InterPro" id="IPR002156">
    <property type="entry name" value="RNaseH_domain"/>
</dbReference>
<dbReference type="InterPro" id="IPR036397">
    <property type="entry name" value="RNaseH_sf"/>
</dbReference>
<dbReference type="InterPro" id="IPR022892">
    <property type="entry name" value="RNaseHI"/>
</dbReference>
<dbReference type="NCBIfam" id="NF001236">
    <property type="entry name" value="PRK00203.1"/>
    <property type="match status" value="1"/>
</dbReference>
<dbReference type="PANTHER" id="PTHR10642">
    <property type="entry name" value="RIBONUCLEASE H1"/>
    <property type="match status" value="1"/>
</dbReference>
<dbReference type="PANTHER" id="PTHR10642:SF26">
    <property type="entry name" value="RIBONUCLEASE H1"/>
    <property type="match status" value="1"/>
</dbReference>
<dbReference type="Pfam" id="PF00075">
    <property type="entry name" value="RNase_H"/>
    <property type="match status" value="1"/>
</dbReference>
<dbReference type="SUPFAM" id="SSF53098">
    <property type="entry name" value="Ribonuclease H-like"/>
    <property type="match status" value="1"/>
</dbReference>
<dbReference type="PROSITE" id="PS50879">
    <property type="entry name" value="RNASE_H_1"/>
    <property type="match status" value="1"/>
</dbReference>
<keyword id="KW-0963">Cytoplasm</keyword>
<keyword id="KW-0255">Endonuclease</keyword>
<keyword id="KW-0378">Hydrolase</keyword>
<keyword id="KW-0460">Magnesium</keyword>
<keyword id="KW-0479">Metal-binding</keyword>
<keyword id="KW-0540">Nuclease</keyword>
<keyword id="KW-1185">Reference proteome</keyword>
<feature type="chain" id="PRO_0000332668" description="Ribonuclease H">
    <location>
        <begin position="1"/>
        <end position="161"/>
    </location>
</feature>
<feature type="domain" description="RNase H type-1" evidence="2">
    <location>
        <begin position="11"/>
        <end position="152"/>
    </location>
</feature>
<feature type="region of interest" description="Disordered" evidence="3">
    <location>
        <begin position="137"/>
        <end position="161"/>
    </location>
</feature>
<feature type="binding site" evidence="1">
    <location>
        <position position="20"/>
    </location>
    <ligand>
        <name>Mg(2+)</name>
        <dbReference type="ChEBI" id="CHEBI:18420"/>
        <label>1</label>
    </ligand>
</feature>
<feature type="binding site" evidence="1">
    <location>
        <position position="20"/>
    </location>
    <ligand>
        <name>Mg(2+)</name>
        <dbReference type="ChEBI" id="CHEBI:18420"/>
        <label>2</label>
    </ligand>
</feature>
<feature type="binding site" evidence="1">
    <location>
        <position position="58"/>
    </location>
    <ligand>
        <name>Mg(2+)</name>
        <dbReference type="ChEBI" id="CHEBI:18420"/>
        <label>1</label>
    </ligand>
</feature>
<feature type="binding site" evidence="1">
    <location>
        <position position="80"/>
    </location>
    <ligand>
        <name>Mg(2+)</name>
        <dbReference type="ChEBI" id="CHEBI:18420"/>
        <label>1</label>
    </ligand>
</feature>
<feature type="binding site" evidence="1">
    <location>
        <position position="144"/>
    </location>
    <ligand>
        <name>Mg(2+)</name>
        <dbReference type="ChEBI" id="CHEBI:18420"/>
        <label>2</label>
    </ligand>
</feature>
<protein>
    <recommendedName>
        <fullName evidence="1">Ribonuclease H</fullName>
        <shortName evidence="1">RNase H</shortName>
        <ecNumber evidence="1">3.1.26.4</ecNumber>
    </recommendedName>
</protein>
<sequence length="161" mass="17661">MSGALSEAGAGPRPVVIHTDGACSGNPGPGGWGAILKFGDTEKELKGGEAHTTNNRMELLAAISALEALTRPCTVDLYTDSQYVKNGIGSWIHNWKRNGWKTADKKPVKNVDLWQRLDAALKSHQVRWHWVKGHAGHDENERADQLARDGLTENRMKSRIG</sequence>
<evidence type="ECO:0000255" key="1">
    <source>
        <dbReference type="HAMAP-Rule" id="MF_00042"/>
    </source>
</evidence>
<evidence type="ECO:0000255" key="2">
    <source>
        <dbReference type="PROSITE-ProRule" id="PRU00408"/>
    </source>
</evidence>
<evidence type="ECO:0000256" key="3">
    <source>
        <dbReference type="SAM" id="MobiDB-lite"/>
    </source>
</evidence>
<proteinExistence type="inferred from homology"/>
<reference key="1">
    <citation type="submission" date="2006-01" db="EMBL/GenBank/DDBJ databases">
        <title>Complete sequence of Rhodopseudomonas palustris HaA2.</title>
        <authorList>
            <consortium name="US DOE Joint Genome Institute"/>
            <person name="Copeland A."/>
            <person name="Lucas S."/>
            <person name="Lapidus A."/>
            <person name="Barry K."/>
            <person name="Detter J.C."/>
            <person name="Glavina T."/>
            <person name="Hammon N."/>
            <person name="Israni S."/>
            <person name="Pitluck S."/>
            <person name="Chain P."/>
            <person name="Malfatti S."/>
            <person name="Shin M."/>
            <person name="Vergez L."/>
            <person name="Schmutz J."/>
            <person name="Larimer F."/>
            <person name="Land M."/>
            <person name="Hauser L."/>
            <person name="Pelletier D.A."/>
            <person name="Kyrpides N."/>
            <person name="Anderson I."/>
            <person name="Oda Y."/>
            <person name="Harwood C.S."/>
            <person name="Richardson P."/>
        </authorList>
    </citation>
    <scope>NUCLEOTIDE SEQUENCE [LARGE SCALE GENOMIC DNA]</scope>
    <source>
        <strain>HaA2</strain>
    </source>
</reference>
<gene>
    <name evidence="1" type="primary">rnhA</name>
    <name type="ordered locus">RPB_1342</name>
</gene>
<organism>
    <name type="scientific">Rhodopseudomonas palustris (strain HaA2)</name>
    <dbReference type="NCBI Taxonomy" id="316058"/>
    <lineage>
        <taxon>Bacteria</taxon>
        <taxon>Pseudomonadati</taxon>
        <taxon>Pseudomonadota</taxon>
        <taxon>Alphaproteobacteria</taxon>
        <taxon>Hyphomicrobiales</taxon>
        <taxon>Nitrobacteraceae</taxon>
        <taxon>Rhodopseudomonas</taxon>
    </lineage>
</organism>